<organism>
    <name type="scientific">Escherichia coli (strain K12 / MC4100 / BW2952)</name>
    <dbReference type="NCBI Taxonomy" id="595496"/>
    <lineage>
        <taxon>Bacteria</taxon>
        <taxon>Pseudomonadati</taxon>
        <taxon>Pseudomonadota</taxon>
        <taxon>Gammaproteobacteria</taxon>
        <taxon>Enterobacterales</taxon>
        <taxon>Enterobacteriaceae</taxon>
        <taxon>Escherichia</taxon>
    </lineage>
</organism>
<evidence type="ECO:0000255" key="1">
    <source>
        <dbReference type="HAMAP-Rule" id="MF_00687"/>
    </source>
</evidence>
<comment type="function">
    <text evidence="1">Catalyzes the isomerization of 5-dehydro-4-deoxy-D-glucuronate to 3-deoxy-D-glycero-2,5-hexodiulosonate.</text>
</comment>
<comment type="catalytic activity">
    <reaction evidence="1">
        <text>5-dehydro-4-deoxy-D-glucuronate = 3-deoxy-D-glycero-2,5-hexodiulosonate</text>
        <dbReference type="Rhea" id="RHEA:23896"/>
        <dbReference type="ChEBI" id="CHEBI:17117"/>
        <dbReference type="ChEBI" id="CHEBI:29071"/>
        <dbReference type="EC" id="5.3.1.17"/>
    </reaction>
</comment>
<comment type="cofactor">
    <cofactor evidence="1">
        <name>Zn(2+)</name>
        <dbReference type="ChEBI" id="CHEBI:29105"/>
    </cofactor>
    <text evidence="1">Binds 1 zinc ion per subunit.</text>
</comment>
<comment type="pathway">
    <text evidence="1">Glycan metabolism; pectin degradation; 2-dehydro-3-deoxy-D-gluconate from pectin: step 4/5.</text>
</comment>
<comment type="subunit">
    <text evidence="1">Homohexamer.</text>
</comment>
<comment type="similarity">
    <text evidence="1">Belongs to the KduI family.</text>
</comment>
<proteinExistence type="inferred from homology"/>
<keyword id="KW-0413">Isomerase</keyword>
<keyword id="KW-0479">Metal-binding</keyword>
<keyword id="KW-0862">Zinc</keyword>
<feature type="chain" id="PRO_1000212560" description="4-deoxy-L-threo-5-hexosulose-uronate ketol-isomerase">
    <location>
        <begin position="1"/>
        <end position="278"/>
    </location>
</feature>
<feature type="binding site" evidence="1">
    <location>
        <position position="196"/>
    </location>
    <ligand>
        <name>Zn(2+)</name>
        <dbReference type="ChEBI" id="CHEBI:29105"/>
    </ligand>
</feature>
<feature type="binding site" evidence="1">
    <location>
        <position position="198"/>
    </location>
    <ligand>
        <name>Zn(2+)</name>
        <dbReference type="ChEBI" id="CHEBI:29105"/>
    </ligand>
</feature>
<feature type="binding site" evidence="1">
    <location>
        <position position="203"/>
    </location>
    <ligand>
        <name>Zn(2+)</name>
        <dbReference type="ChEBI" id="CHEBI:29105"/>
    </ligand>
</feature>
<feature type="binding site" evidence="1">
    <location>
        <position position="245"/>
    </location>
    <ligand>
        <name>Zn(2+)</name>
        <dbReference type="ChEBI" id="CHEBI:29105"/>
    </ligand>
</feature>
<accession>C5A0C6</accession>
<gene>
    <name evidence="1" type="primary">kduI</name>
    <name type="ordered locus">BWG_2579</name>
</gene>
<protein>
    <recommendedName>
        <fullName evidence="1">4-deoxy-L-threo-5-hexosulose-uronate ketol-isomerase</fullName>
        <ecNumber evidence="1">5.3.1.17</ecNumber>
    </recommendedName>
    <alternativeName>
        <fullName evidence="1">5-keto-4-deoxyuronate isomerase</fullName>
    </alternativeName>
    <alternativeName>
        <fullName evidence="1">DKI isomerase</fullName>
    </alternativeName>
</protein>
<dbReference type="EC" id="5.3.1.17" evidence="1"/>
<dbReference type="EMBL" id="CP001396">
    <property type="protein sequence ID" value="ACR64105.1"/>
    <property type="molecule type" value="Genomic_DNA"/>
</dbReference>
<dbReference type="RefSeq" id="WP_000383237.1">
    <property type="nucleotide sequence ID" value="NC_012759.1"/>
</dbReference>
<dbReference type="SMR" id="C5A0C6"/>
<dbReference type="GeneID" id="75203765"/>
<dbReference type="KEGG" id="ebw:BWG_2579"/>
<dbReference type="HOGENOM" id="CLU_062609_0_0_6"/>
<dbReference type="UniPathway" id="UPA00545">
    <property type="reaction ID" value="UER00826"/>
</dbReference>
<dbReference type="GO" id="GO:0008697">
    <property type="term" value="F:4-deoxy-L-threo-5-hexosulose-uronate ketol-isomerase activity"/>
    <property type="evidence" value="ECO:0007669"/>
    <property type="project" value="UniProtKB-UniRule"/>
</dbReference>
<dbReference type="GO" id="GO:0008270">
    <property type="term" value="F:zinc ion binding"/>
    <property type="evidence" value="ECO:0007669"/>
    <property type="project" value="UniProtKB-UniRule"/>
</dbReference>
<dbReference type="GO" id="GO:0019698">
    <property type="term" value="P:D-galacturonate catabolic process"/>
    <property type="evidence" value="ECO:0007669"/>
    <property type="project" value="TreeGrafter"/>
</dbReference>
<dbReference type="GO" id="GO:0042840">
    <property type="term" value="P:D-glucuronate catabolic process"/>
    <property type="evidence" value="ECO:0007669"/>
    <property type="project" value="TreeGrafter"/>
</dbReference>
<dbReference type="GO" id="GO:0045490">
    <property type="term" value="P:pectin catabolic process"/>
    <property type="evidence" value="ECO:0007669"/>
    <property type="project" value="UniProtKB-UniRule"/>
</dbReference>
<dbReference type="CDD" id="cd20491">
    <property type="entry name" value="cupin_KduI_C"/>
    <property type="match status" value="1"/>
</dbReference>
<dbReference type="CDD" id="cd20294">
    <property type="entry name" value="cupin_KduI_N"/>
    <property type="match status" value="1"/>
</dbReference>
<dbReference type="FunFam" id="2.60.120.10:FF:000018">
    <property type="entry name" value="4-deoxy-L-threo-5-hexosulose-uronate ketol-isomerase"/>
    <property type="match status" value="1"/>
</dbReference>
<dbReference type="FunFam" id="2.60.120.520:FF:000001">
    <property type="entry name" value="4-deoxy-L-threo-5-hexosulose-uronate ketol-isomerase"/>
    <property type="match status" value="1"/>
</dbReference>
<dbReference type="Gene3D" id="2.60.120.10">
    <property type="entry name" value="Jelly Rolls"/>
    <property type="match status" value="1"/>
</dbReference>
<dbReference type="Gene3D" id="2.60.120.520">
    <property type="entry name" value="pectin degrading enzyme 5-keto 4- deoxyuronate isomerase, domain 1"/>
    <property type="match status" value="1"/>
</dbReference>
<dbReference type="HAMAP" id="MF_00687">
    <property type="entry name" value="KduI"/>
    <property type="match status" value="1"/>
</dbReference>
<dbReference type="InterPro" id="IPR007045">
    <property type="entry name" value="KduI"/>
</dbReference>
<dbReference type="InterPro" id="IPR021120">
    <property type="entry name" value="KduI/IolB_isomerase"/>
</dbReference>
<dbReference type="InterPro" id="IPR027449">
    <property type="entry name" value="KduI_N"/>
</dbReference>
<dbReference type="InterPro" id="IPR014710">
    <property type="entry name" value="RmlC-like_jellyroll"/>
</dbReference>
<dbReference type="InterPro" id="IPR011051">
    <property type="entry name" value="RmlC_Cupin_sf"/>
</dbReference>
<dbReference type="NCBIfam" id="NF002091">
    <property type="entry name" value="PRK00924.1"/>
    <property type="match status" value="1"/>
</dbReference>
<dbReference type="PANTHER" id="PTHR38461">
    <property type="entry name" value="4-DEOXY-L-THREO-5-HEXOSULOSE-URONATE KETOL-ISOMERASE"/>
    <property type="match status" value="1"/>
</dbReference>
<dbReference type="PANTHER" id="PTHR38461:SF1">
    <property type="entry name" value="4-DEOXY-L-THREO-5-HEXOSULOSE-URONATE KETOL-ISOMERASE"/>
    <property type="match status" value="1"/>
</dbReference>
<dbReference type="Pfam" id="PF04962">
    <property type="entry name" value="KduI"/>
    <property type="match status" value="1"/>
</dbReference>
<dbReference type="PIRSF" id="PIRSF006625">
    <property type="entry name" value="KduI"/>
    <property type="match status" value="1"/>
</dbReference>
<dbReference type="SUPFAM" id="SSF51182">
    <property type="entry name" value="RmlC-like cupins"/>
    <property type="match status" value="1"/>
</dbReference>
<name>KDUI_ECOBW</name>
<sequence length="278" mass="31076">MDVRQSIHSAHAKTLDTQGLRNEFLVEKVFVADEYTMVYSHIDRIIVGGIMPITKTVSVGGEVGKQLGVSYFLERRELGVINIGGAGTITVDGQCYEIGHRDALYVGKGAKEVVFASIDTGTPAKFYYNCAPAHTTYPTKKVTPDEVSPVTLGDNLTSNRRTINKYFVPDVLETCQLSMGLTELAPGNLWNTMPCHTHERRMEVYFYFNMDDDACVFHMMGQPQETRHIVMHNEQAVISPSWSIHSGVGTKAYTFIWGMVGENQVFDDMDHVAVKDLR</sequence>
<reference key="1">
    <citation type="journal article" date="2009" name="J. Bacteriol.">
        <title>Genomic sequencing reveals regulatory mutations and recombinational events in the widely used MC4100 lineage of Escherichia coli K-12.</title>
        <authorList>
            <person name="Ferenci T."/>
            <person name="Zhou Z."/>
            <person name="Betteridge T."/>
            <person name="Ren Y."/>
            <person name="Liu Y."/>
            <person name="Feng L."/>
            <person name="Reeves P.R."/>
            <person name="Wang L."/>
        </authorList>
    </citation>
    <scope>NUCLEOTIDE SEQUENCE [LARGE SCALE GENOMIC DNA]</scope>
    <source>
        <strain>K12 / MC4100 / BW2952</strain>
    </source>
</reference>